<organism>
    <name type="scientific">Homo sapiens</name>
    <name type="common">Human</name>
    <dbReference type="NCBI Taxonomy" id="9606"/>
    <lineage>
        <taxon>Eukaryota</taxon>
        <taxon>Metazoa</taxon>
        <taxon>Chordata</taxon>
        <taxon>Craniata</taxon>
        <taxon>Vertebrata</taxon>
        <taxon>Euteleostomi</taxon>
        <taxon>Mammalia</taxon>
        <taxon>Eutheria</taxon>
        <taxon>Euarchontoglires</taxon>
        <taxon>Primates</taxon>
        <taxon>Haplorrhini</taxon>
        <taxon>Catarrhini</taxon>
        <taxon>Hominidae</taxon>
        <taxon>Homo</taxon>
    </lineage>
</organism>
<reference key="1">
    <citation type="journal article" date="1999" name="Matrix Biol.">
        <title>Sequence, recombinant expression and tissue localization of two novel extracellular matrix proteins, fibulin-3 and fibulin-4.</title>
        <authorList>
            <person name="Giltay R."/>
            <person name="Timpl R."/>
            <person name="Kostka G."/>
        </authorList>
    </citation>
    <scope>NUCLEOTIDE SEQUENCE [MRNA]</scope>
    <scope>VARIANT VAL-259</scope>
    <source>
        <tissue>Melanoma</tissue>
    </source>
</reference>
<reference key="2">
    <citation type="submission" date="1998-09" db="EMBL/GenBank/DDBJ databases">
        <authorList>
            <person name="Zemel R."/>
            <person name="Shaul Y."/>
        </authorList>
    </citation>
    <scope>NUCLEOTIDE SEQUENCE [MRNA]</scope>
    <scope>VARIANT VAL-259</scope>
</reference>
<reference key="3">
    <citation type="journal article" date="2000" name="Hum. Genet.">
        <title>Isolation of a paralog of the Doyne honeycomb retinal dystrophy gene from the multiple retinopathy critical region on 11q13.</title>
        <authorList>
            <person name="Katsanis N."/>
            <person name="Venable S."/>
            <person name="Smith J.R."/>
            <person name="Lupski J.R."/>
        </authorList>
    </citation>
    <scope>NUCLEOTIDE SEQUENCE [MRNA]</scope>
    <scope>VARIANT VAL-259</scope>
</reference>
<reference key="4">
    <citation type="journal article" date="2004" name="Nat. Genet.">
        <title>Complete sequencing and characterization of 21,243 full-length human cDNAs.</title>
        <authorList>
            <person name="Ota T."/>
            <person name="Suzuki Y."/>
            <person name="Nishikawa T."/>
            <person name="Otsuki T."/>
            <person name="Sugiyama T."/>
            <person name="Irie R."/>
            <person name="Wakamatsu A."/>
            <person name="Hayashi K."/>
            <person name="Sato H."/>
            <person name="Nagai K."/>
            <person name="Kimura K."/>
            <person name="Makita H."/>
            <person name="Sekine M."/>
            <person name="Obayashi M."/>
            <person name="Nishi T."/>
            <person name="Shibahara T."/>
            <person name="Tanaka T."/>
            <person name="Ishii S."/>
            <person name="Yamamoto J."/>
            <person name="Saito K."/>
            <person name="Kawai Y."/>
            <person name="Isono Y."/>
            <person name="Nakamura Y."/>
            <person name="Nagahari K."/>
            <person name="Murakami K."/>
            <person name="Yasuda T."/>
            <person name="Iwayanagi T."/>
            <person name="Wagatsuma M."/>
            <person name="Shiratori A."/>
            <person name="Sudo H."/>
            <person name="Hosoiri T."/>
            <person name="Kaku Y."/>
            <person name="Kodaira H."/>
            <person name="Kondo H."/>
            <person name="Sugawara M."/>
            <person name="Takahashi M."/>
            <person name="Kanda K."/>
            <person name="Yokoi T."/>
            <person name="Furuya T."/>
            <person name="Kikkawa E."/>
            <person name="Omura Y."/>
            <person name="Abe K."/>
            <person name="Kamihara K."/>
            <person name="Katsuta N."/>
            <person name="Sato K."/>
            <person name="Tanikawa M."/>
            <person name="Yamazaki M."/>
            <person name="Ninomiya K."/>
            <person name="Ishibashi T."/>
            <person name="Yamashita H."/>
            <person name="Murakawa K."/>
            <person name="Fujimori K."/>
            <person name="Tanai H."/>
            <person name="Kimata M."/>
            <person name="Watanabe M."/>
            <person name="Hiraoka S."/>
            <person name="Chiba Y."/>
            <person name="Ishida S."/>
            <person name="Ono Y."/>
            <person name="Takiguchi S."/>
            <person name="Watanabe S."/>
            <person name="Yosida M."/>
            <person name="Hotuta T."/>
            <person name="Kusano J."/>
            <person name="Kanehori K."/>
            <person name="Takahashi-Fujii A."/>
            <person name="Hara H."/>
            <person name="Tanase T.-O."/>
            <person name="Nomura Y."/>
            <person name="Togiya S."/>
            <person name="Komai F."/>
            <person name="Hara R."/>
            <person name="Takeuchi K."/>
            <person name="Arita M."/>
            <person name="Imose N."/>
            <person name="Musashino K."/>
            <person name="Yuuki H."/>
            <person name="Oshima A."/>
            <person name="Sasaki N."/>
            <person name="Aotsuka S."/>
            <person name="Yoshikawa Y."/>
            <person name="Matsunawa H."/>
            <person name="Ichihara T."/>
            <person name="Shiohata N."/>
            <person name="Sano S."/>
            <person name="Moriya S."/>
            <person name="Momiyama H."/>
            <person name="Satoh N."/>
            <person name="Takami S."/>
            <person name="Terashima Y."/>
            <person name="Suzuki O."/>
            <person name="Nakagawa S."/>
            <person name="Senoh A."/>
            <person name="Mizoguchi H."/>
            <person name="Goto Y."/>
            <person name="Shimizu F."/>
            <person name="Wakebe H."/>
            <person name="Hishigaki H."/>
            <person name="Watanabe T."/>
            <person name="Sugiyama A."/>
            <person name="Takemoto M."/>
            <person name="Kawakami B."/>
            <person name="Yamazaki M."/>
            <person name="Watanabe K."/>
            <person name="Kumagai A."/>
            <person name="Itakura S."/>
            <person name="Fukuzumi Y."/>
            <person name="Fujimori Y."/>
            <person name="Komiyama M."/>
            <person name="Tashiro H."/>
            <person name="Tanigami A."/>
            <person name="Fujiwara T."/>
            <person name="Ono T."/>
            <person name="Yamada K."/>
            <person name="Fujii Y."/>
            <person name="Ozaki K."/>
            <person name="Hirao M."/>
            <person name="Ohmori Y."/>
            <person name="Kawabata A."/>
            <person name="Hikiji T."/>
            <person name="Kobatake N."/>
            <person name="Inagaki H."/>
            <person name="Ikema Y."/>
            <person name="Okamoto S."/>
            <person name="Okitani R."/>
            <person name="Kawakami T."/>
            <person name="Noguchi S."/>
            <person name="Itoh T."/>
            <person name="Shigeta K."/>
            <person name="Senba T."/>
            <person name="Matsumura K."/>
            <person name="Nakajima Y."/>
            <person name="Mizuno T."/>
            <person name="Morinaga M."/>
            <person name="Sasaki M."/>
            <person name="Togashi T."/>
            <person name="Oyama M."/>
            <person name="Hata H."/>
            <person name="Watanabe M."/>
            <person name="Komatsu T."/>
            <person name="Mizushima-Sugano J."/>
            <person name="Satoh T."/>
            <person name="Shirai Y."/>
            <person name="Takahashi Y."/>
            <person name="Nakagawa K."/>
            <person name="Okumura K."/>
            <person name="Nagase T."/>
            <person name="Nomura N."/>
            <person name="Kikuchi H."/>
            <person name="Masuho Y."/>
            <person name="Yamashita R."/>
            <person name="Nakai K."/>
            <person name="Yada T."/>
            <person name="Nakamura Y."/>
            <person name="Ohara O."/>
            <person name="Isogai T."/>
            <person name="Sugano S."/>
        </authorList>
    </citation>
    <scope>NUCLEOTIDE SEQUENCE [LARGE SCALE MRNA]</scope>
    <scope>VARIANT VAL-259</scope>
    <source>
        <tissue>Embryo</tissue>
        <tissue>Synovium</tissue>
    </source>
</reference>
<reference key="5">
    <citation type="journal article" date="2003" name="Genome Res.">
        <title>The secreted protein discovery initiative (SPDI), a large-scale effort to identify novel human secreted and transmembrane proteins: a bioinformatics assessment.</title>
        <authorList>
            <person name="Clark H.F."/>
            <person name="Gurney A.L."/>
            <person name="Abaya E."/>
            <person name="Baker K."/>
            <person name="Baldwin D.T."/>
            <person name="Brush J."/>
            <person name="Chen J."/>
            <person name="Chow B."/>
            <person name="Chui C."/>
            <person name="Crowley C."/>
            <person name="Currell B."/>
            <person name="Deuel B."/>
            <person name="Dowd P."/>
            <person name="Eaton D."/>
            <person name="Foster J.S."/>
            <person name="Grimaldi C."/>
            <person name="Gu Q."/>
            <person name="Hass P.E."/>
            <person name="Heldens S."/>
            <person name="Huang A."/>
            <person name="Kim H.S."/>
            <person name="Klimowski L."/>
            <person name="Jin Y."/>
            <person name="Johnson S."/>
            <person name="Lee J."/>
            <person name="Lewis L."/>
            <person name="Liao D."/>
            <person name="Mark M.R."/>
            <person name="Robbie E."/>
            <person name="Sanchez C."/>
            <person name="Schoenfeld J."/>
            <person name="Seshagiri S."/>
            <person name="Simmons L."/>
            <person name="Singh J."/>
            <person name="Smith V."/>
            <person name="Stinson J."/>
            <person name="Vagts A."/>
            <person name="Vandlen R.L."/>
            <person name="Watanabe C."/>
            <person name="Wieand D."/>
            <person name="Woods K."/>
            <person name="Xie M.-H."/>
            <person name="Yansura D.G."/>
            <person name="Yi S."/>
            <person name="Yu G."/>
            <person name="Yuan J."/>
            <person name="Zhang M."/>
            <person name="Zhang Z."/>
            <person name="Goddard A.D."/>
            <person name="Wood W.I."/>
            <person name="Godowski P.J."/>
            <person name="Gray A.M."/>
        </authorList>
    </citation>
    <scope>NUCLEOTIDE SEQUENCE [LARGE SCALE MRNA]</scope>
    <scope>VARIANT VAL-259</scope>
</reference>
<reference key="6">
    <citation type="journal article" date="2005" name="DNA Res.">
        <title>Signal sequence and keyword trap in silico for selection of full-length human cDNAs encoding secretion or membrane proteins from oligo-capped cDNA libraries.</title>
        <authorList>
            <person name="Otsuki T."/>
            <person name="Ota T."/>
            <person name="Nishikawa T."/>
            <person name="Hayashi K."/>
            <person name="Suzuki Y."/>
            <person name="Yamamoto J."/>
            <person name="Wakamatsu A."/>
            <person name="Kimura K."/>
            <person name="Sakamoto K."/>
            <person name="Hatano N."/>
            <person name="Kawai Y."/>
            <person name="Ishii S."/>
            <person name="Saito K."/>
            <person name="Kojima S."/>
            <person name="Sugiyama T."/>
            <person name="Ono T."/>
            <person name="Okano K."/>
            <person name="Yoshikawa Y."/>
            <person name="Aotsuka S."/>
            <person name="Sasaki N."/>
            <person name="Hattori A."/>
            <person name="Okumura K."/>
            <person name="Nagai K."/>
            <person name="Sugano S."/>
            <person name="Isogai T."/>
        </authorList>
    </citation>
    <scope>NUCLEOTIDE SEQUENCE [LARGE SCALE MRNA]</scope>
    <scope>VARIANT VAL-259</scope>
    <source>
        <tissue>Placenta</tissue>
    </source>
</reference>
<reference key="7">
    <citation type="journal article" date="2006" name="Nature">
        <title>Human chromosome 11 DNA sequence and analysis including novel gene identification.</title>
        <authorList>
            <person name="Taylor T.D."/>
            <person name="Noguchi H."/>
            <person name="Totoki Y."/>
            <person name="Toyoda A."/>
            <person name="Kuroki Y."/>
            <person name="Dewar K."/>
            <person name="Lloyd C."/>
            <person name="Itoh T."/>
            <person name="Takeda T."/>
            <person name="Kim D.-W."/>
            <person name="She X."/>
            <person name="Barlow K.F."/>
            <person name="Bloom T."/>
            <person name="Bruford E."/>
            <person name="Chang J.L."/>
            <person name="Cuomo C.A."/>
            <person name="Eichler E."/>
            <person name="FitzGerald M.G."/>
            <person name="Jaffe D.B."/>
            <person name="LaButti K."/>
            <person name="Nicol R."/>
            <person name="Park H.-S."/>
            <person name="Seaman C."/>
            <person name="Sougnez C."/>
            <person name="Yang X."/>
            <person name="Zimmer A.R."/>
            <person name="Zody M.C."/>
            <person name="Birren B.W."/>
            <person name="Nusbaum C."/>
            <person name="Fujiyama A."/>
            <person name="Hattori M."/>
            <person name="Rogers J."/>
            <person name="Lander E.S."/>
            <person name="Sakaki Y."/>
        </authorList>
    </citation>
    <scope>NUCLEOTIDE SEQUENCE [LARGE SCALE GENOMIC DNA]</scope>
</reference>
<reference key="8">
    <citation type="journal article" date="2004" name="Genome Res.">
        <title>The status, quality, and expansion of the NIH full-length cDNA project: the Mammalian Gene Collection (MGC).</title>
        <authorList>
            <consortium name="The MGC Project Team"/>
        </authorList>
    </citation>
    <scope>NUCLEOTIDE SEQUENCE [LARGE SCALE MRNA]</scope>
    <scope>VARIANT VAL-259</scope>
    <source>
        <tissue>Brain</tissue>
    </source>
</reference>
<reference key="9">
    <citation type="journal article" date="2013" name="J. Biol. Chem.">
        <title>Fibulin-3, -4, and -5 are highly susceptible to proteolysis, interact with cells and heparin, and form multimers.</title>
        <authorList>
            <person name="Djokic J."/>
            <person name="Fagotto-Kaufmann C."/>
            <person name="Bartels R."/>
            <person name="Nelea V."/>
            <person name="Reinhardt D.P."/>
        </authorList>
    </citation>
    <scope>PROTEIN SEQUENCE OF 24-31 AND 93-100</scope>
    <scope>GLYCOSYLATION</scope>
    <scope>CLEAVAGE BY MMP3; MMP7; MMP9 AND MMP12</scope>
    <scope>FUNCTION</scope>
    <scope>SUBUNIT</scope>
</reference>
<reference key="10">
    <citation type="journal article" date="2016" name="Matrix Biol.">
        <title>Functional consequence of fibulin-4 missense mutations associated with vascular and skeletal abnormalities and cutis laxa.</title>
        <authorList>
            <person name="Sasaki T."/>
            <person name="Hanisch F.G."/>
            <person name="Deutzmann R."/>
            <person name="Sakai L.Y."/>
            <person name="Sakuma T."/>
            <person name="Miyamoto T."/>
            <person name="Yamamoto T."/>
            <person name="Hannappel E."/>
            <person name="Chu M.L."/>
            <person name="Lanig H."/>
            <person name="von der Mark K."/>
        </authorList>
    </citation>
    <scope>PROTEIN SEQUENCE OF 88-94 AND 91-98</scope>
    <scope>CHARACTERIZATION OF VARIANTS ARCL1B LYS-57; LYS-126; TYR-267; CYS-279 AND THR-397</scope>
    <scope>GLYCOSYLATION</scope>
    <scope>SUBCELLULAR LOCATION</scope>
    <scope>FUNCTION</scope>
    <scope>INTERACTION WITH LOX; LOXL1; LOXL2; LTBP1; LTBP3; LTBP4 AND TGFB1</scope>
    <scope>CLEAVAGE BY ELANE; MMP2 AND MMP9</scope>
</reference>
<reference key="11">
    <citation type="journal article" date="2007" name="J. Biol. Chem.">
        <title>Fibrillin-1 interactions with fibulins depend on the first hybrid domain and provide an adaptor function to tropoelastin.</title>
        <authorList>
            <person name="El-Hallous E."/>
            <person name="Sasaki T."/>
            <person name="Hubmacher D."/>
            <person name="Getie M."/>
            <person name="Tiedemann K."/>
            <person name="Brinckmann J."/>
            <person name="Baetge B."/>
            <person name="Davis E.C."/>
            <person name="Reinhardt D.P."/>
        </authorList>
    </citation>
    <scope>INTERACTION WITH FBN1</scope>
</reference>
<reference key="12">
    <citation type="journal article" date="2008" name="Biochemistry">
        <title>Fibrillins, fibulins, and matrix-associated glycoprotein modulate the kinetics and morphology of in vitro self-assembly of a recombinant elastin-like polypeptide.</title>
        <authorList>
            <person name="Cirulis J.T."/>
            <person name="Bellingham C.M."/>
            <person name="Davis E.C."/>
            <person name="Hubmacher D."/>
            <person name="Reinhardt D.P."/>
            <person name="Mecham R.P."/>
            <person name="Keeley F.W."/>
        </authorList>
    </citation>
    <scope>FUNCTION</scope>
</reference>
<reference key="13">
    <citation type="journal article" date="2009" name="J. Biol. Chem.">
        <title>Latent transforming growth factor beta-binding proteins and fibulins compete for fibrillin-1 and exhibit exquisite specificities in binding sites.</title>
        <authorList>
            <person name="Ono R.N."/>
            <person name="Sengle G."/>
            <person name="Charbonneau N.L."/>
            <person name="Carlberg V."/>
            <person name="Baechinger H.P."/>
            <person name="Sasaki T."/>
            <person name="Lee-Arteaga S."/>
            <person name="Zilberberg L."/>
            <person name="Rifkin D.B."/>
            <person name="Ramirez F."/>
            <person name="Chu M.L."/>
            <person name="Sakai L.Y."/>
        </authorList>
    </citation>
    <scope>INTERACTION WITH FBN1</scope>
</reference>
<reference key="14">
    <citation type="journal article" date="2009" name="J. Biol. Chem.">
        <title>Differential regulation of elastic fiber formation by fibulin-4 and -5.</title>
        <authorList>
            <person name="Choudhury R."/>
            <person name="McGovern A."/>
            <person name="Ridley C."/>
            <person name="Cain S.A."/>
            <person name="Baldwin A."/>
            <person name="Wang M.C."/>
            <person name="Guo C."/>
            <person name="Mironov A. Jr."/>
            <person name="Drymoussi Z."/>
            <person name="Trump D."/>
            <person name="Shuttleworth A."/>
            <person name="Baldock C."/>
            <person name="Kielty C.M."/>
        </authorList>
    </citation>
    <scope>SUBUNIT</scope>
    <scope>INTERACTION WITH ELN; LOX; FBLN5 AND FBN1</scope>
    <scope>FUNCTION</scope>
</reference>
<reference key="15">
    <citation type="journal article" date="2009" name="Proc. Natl. Acad. Sci. U.S.A.">
        <title>Fibulin-4 conducts proper elastogenesis via interaction with cross-linking enzyme lysyl oxidase.</title>
        <authorList>
            <person name="Horiguchi M."/>
            <person name="Inoue T."/>
            <person name="Ohbayashi T."/>
            <person name="Hirai M."/>
            <person name="Noda K."/>
            <person name="Marmorstein L.Y."/>
            <person name="Yabe D."/>
            <person name="Takagi K."/>
            <person name="Akama T.O."/>
            <person name="Kita T."/>
            <person name="Kimura T."/>
            <person name="Nakamura T."/>
        </authorList>
    </citation>
    <scope>INTERACTION WITH LOX</scope>
</reference>
<reference key="16">
    <citation type="journal article" date="2012" name="Mol. Vis.">
        <title>Yeast two-hybrid analysis of a human trabecular meshwork cDNA library identified EFEMP2 as a novel PITX2 interacting protein.</title>
        <authorList>
            <person name="Acharya M."/>
            <person name="Sharp M.W."/>
            <person name="Mirzayans F."/>
            <person name="Footz T."/>
            <person name="Huang L."/>
            <person name="Birdi C."/>
            <person name="Walter M.A."/>
        </authorList>
    </citation>
    <scope>INTERACTION WITH PITX2</scope>
</reference>
<reference key="17">
    <citation type="journal article" date="2014" name="J. Proteomics">
        <title>An enzyme assisted RP-RPLC approach for in-depth analysis of human liver phosphoproteome.</title>
        <authorList>
            <person name="Bian Y."/>
            <person name="Song C."/>
            <person name="Cheng K."/>
            <person name="Dong M."/>
            <person name="Wang F."/>
            <person name="Huang J."/>
            <person name="Sun D."/>
            <person name="Wang L."/>
            <person name="Ye M."/>
            <person name="Zou H."/>
        </authorList>
    </citation>
    <scope>IDENTIFICATION BY MASS SPECTROMETRY [LARGE SCALE ANALYSIS]</scope>
    <source>
        <tissue>Liver</tissue>
    </source>
</reference>
<reference key="18">
    <citation type="submission" date="2009-07" db="PDB data bank">
        <title>Solution NMR structure of the EGF-like 1 domain of human fibulin-4.</title>
        <authorList>
            <consortium name="Northeast structural genomics consortium (NESG)"/>
        </authorList>
    </citation>
    <scope>STRUCTURE BY NMR OF 54-123</scope>
    <scope>DISULFIDE BONDS</scope>
</reference>
<reference key="19">
    <citation type="journal article" date="2006" name="Am. J. Hum. Genet.">
        <title>Fibulin-4: a novel gene for an autosomal recessive cutis laxa syndrome.</title>
        <authorList>
            <person name="Hucthagowder V."/>
            <person name="Sausgruber N."/>
            <person name="Kim K.H."/>
            <person name="Angle B."/>
            <person name="Marmorstein L.Y."/>
            <person name="Urban Z."/>
        </authorList>
    </citation>
    <scope>VARIANT ARCL1B LYS-57</scope>
</reference>
<reference key="20">
    <citation type="journal article" date="2007" name="Am. J. Med. Genet. A">
        <title>Compound heterozygous mutations in fibulin-4 causing neonatal lethal pulmonary artery occlusion, aortic aneurysm, arachnodactyly, and mild cutis laxa.</title>
        <authorList>
            <person name="Dasouki M."/>
            <person name="Markova D."/>
            <person name="Garola R."/>
            <person name="Sasaki T."/>
            <person name="Charbonneau N.L."/>
            <person name="Sakai L.Y."/>
            <person name="Chu M.L."/>
        </authorList>
    </citation>
    <scope>VARIANT ARCL1B CYS-279</scope>
</reference>
<reference key="21">
    <citation type="journal article" date="2009" name="Clin. Genet.">
        <title>Lethal cutis laxa with contractural arachnodactyly, overgrowth and soft tissue bleeding due to a novel homozygous fibulin-4 gene mutation.</title>
        <authorList>
            <person name="Hoyer J."/>
            <person name="Kraus C."/>
            <person name="Hammersen G."/>
            <person name="Geppert J.P."/>
            <person name="Rauch A."/>
        </authorList>
    </citation>
    <scope>VARIANT ARCL1B TYR-267</scope>
</reference>
<reference key="22">
    <citation type="journal article" date="2010" name="Eur. J. Hum. Genet.">
        <title>Altered TGFbeta signaling and cardiovascular manifestations in patients with autosomal recessive cutis laxa type I caused by fibulin-4 deficiency.</title>
        <authorList>
            <person name="Renard M."/>
            <person name="Holm T."/>
            <person name="Veith R."/>
            <person name="Callewaert B.L."/>
            <person name="Ades L.C."/>
            <person name="Baspinar O."/>
            <person name="Pickart A."/>
            <person name="Dasouki M."/>
            <person name="Hoyer J."/>
            <person name="Rauch A."/>
            <person name="Trapane P."/>
            <person name="Earing M.G."/>
            <person name="Coucke P.J."/>
            <person name="Sakai L.Y."/>
            <person name="Dietz H.C."/>
            <person name="De Paepe A.M."/>
            <person name="Loeys B.L."/>
        </authorList>
    </citation>
    <scope>VARIANTS ARCL1B LYS-126; VAL-126 AND THR-397</scope>
    <scope>CHARACTERIZATION OF VARIANTS ARCL1B LYS-126 AND TYR-267</scope>
    <scope>SUBCELLULAR LOCATION</scope>
</reference>
<reference key="23">
    <citation type="journal article" date="2012" name="Orphanet J. Rare Dis.">
        <title>Characterization of a distinct lethal arteriopathy syndrome in twenty-two infants associated with an identical, novel mutation in FBLN4 gene, confirms fibulin-4 as a critical determinant of human vascular elastogenesis.</title>
        <authorList>
            <person name="Kappanayil M."/>
            <person name="Nampoothiri S."/>
            <person name="Kannan R."/>
            <person name="Renard M."/>
            <person name="Coucke P."/>
            <person name="Malfait F."/>
            <person name="Menon S."/>
            <person name="Ravindran H.K."/>
            <person name="Kurup R."/>
            <person name="Faiyaz-Ul-Haque M."/>
            <person name="Kumar K."/>
            <person name="De Paepe A."/>
        </authorList>
    </citation>
    <scope>VARIANTS ARCL1B ALA-203 AND CYS-227</scope>
</reference>
<proteinExistence type="evidence at protein level"/>
<gene>
    <name evidence="27" type="primary">EFEMP2</name>
    <name type="synonym">FBLN4</name>
    <name type="ORF">UNQ200/PRO226</name>
</gene>
<comment type="function">
    <text evidence="1 13 15 21 22">Plays a crucial role in elastic fiber formation in tissue, and in the formation of ultrastructural connections between elastic laminae and smooth muscle cells in the aorta, therefore participates in terminal differentiation and maturation of smooth muscle cell (SMC) and in the mechanical properties and wall integrity maintenance of the aorta (PubMed:27339457). In addition, is involved in the control of collagen fibril assembly in tissue throught proteolytic activation of LOX leading to cross- linking of collagen and elastin (By similarity). Also promotes ELN coacervation and participates in the deposition of ELN coacervates on to microfibrils but also regulates ELN cross- linking through LOX interaction (PubMed:18973305, PubMed:19570982). Moreover adheres to the cells through heparin binding in a calcium-dependent manner and regulates vascularlar smooth muscle cells proliferation through angiotensin signaling (PubMed:23782690).</text>
</comment>
<comment type="subunit">
    <text evidence="1 11 14 15 17 19 21 22">Homodimer; disulfide-linked (PubMed:19570982, PubMed:23782690). Multimer; allows heparin binding (PubMed:23782690). Monomer (By similarity). Interacts with FBN1 (via N-terminal domain); this interaction inhibits EFEMP2 binding to LOX and ELN (PubMed:17255108, PubMed:19349279, PubMed:19570982). Interacts with LOX (via propeptide); this interaction is strong and facilitates formation of ternary complexes with ELN during elastic fiber assembly; this interaction limits interaction of EFEMP2 with FBLN5 (PubMed:19570982, PubMed:19855011, PubMed:27339457). Interacts with PITX2 (PubMed:22919265). Interacts with ELN with moderate affinity; this interaction regulates ELN self-assembly maturation stage (PubMed:19570982). Interacts with FBLN5 with moderate affinity (PubMed:19570982). Interacts with LOXL1 (via propeptide), LTBP1 and TGFB1 stronger than with LOXL2 and LTBP3 (PubMed:27339457). Interacts with PCOLCE (By similarity). Interacts with collagen type IV trimer (COL4A1-COL4A1-COL4A2), NID2 and moderately with COL15A1-derived endostatin (By similarity). Interacts with EMILIN1; this interaction promotes the incorporation of EFEMP2 into the extracellular matrix (By similarity). Interacts with LTBP4; the LTBP4 long form (LTBP4L) has a stronger binding affinity than the LTBP4 short form and the LTBP4 long form promotes fibrillar deposition of EFEMP2 (PubMed:27339457).</text>
</comment>
<comment type="interaction">
    <interactant intactId="EBI-743414">
        <id>O95967</id>
    </interactant>
    <interactant intactId="EBI-10173507">
        <id>Q6UY14-3</id>
        <label>ADAMTSL4</label>
    </interactant>
    <organismsDiffer>false</organismsDiffer>
    <experiments>3</experiments>
</comment>
<comment type="interaction">
    <interactant intactId="EBI-743414">
        <id>O95967</id>
    </interactant>
    <interactant intactId="EBI-8583355">
        <id>Q9Y4X0</id>
        <label>AMMECR1</label>
    </interactant>
    <organismsDiffer>false</organismsDiffer>
    <experiments>3</experiments>
</comment>
<comment type="interaction">
    <interactant intactId="EBI-743414">
        <id>O95967</id>
    </interactant>
    <interactant intactId="EBI-12823597">
        <id>Q9Y4X0-3</id>
        <label>AMMECR1</label>
    </interactant>
    <organismsDiffer>false</organismsDiffer>
    <experiments>3</experiments>
</comment>
<comment type="interaction">
    <interactant intactId="EBI-743414">
        <id>O95967</id>
    </interactant>
    <interactant intactId="EBI-12224467">
        <id>Q9NYG5-2</id>
        <label>ANAPC11</label>
    </interactant>
    <organismsDiffer>false</organismsDiffer>
    <experiments>3</experiments>
</comment>
<comment type="interaction">
    <interactant intactId="EBI-743414">
        <id>O95967</id>
    </interactant>
    <interactant intactId="EBI-541426">
        <id>Q9BXS5</id>
        <label>AP1M1</label>
    </interactant>
    <organismsDiffer>false</organismsDiffer>
    <experiments>3</experiments>
</comment>
<comment type="interaction">
    <interactant intactId="EBI-743414">
        <id>O95967</id>
    </interactant>
    <interactant intactId="EBI-2875665">
        <id>Q96B67</id>
        <label>ARRDC3</label>
    </interactant>
    <organismsDiffer>false</organismsDiffer>
    <experiments>3</experiments>
</comment>
<comment type="interaction">
    <interactant intactId="EBI-743414">
        <id>O95967</id>
    </interactant>
    <interactant intactId="EBI-945980">
        <id>P54259</id>
        <label>ATN1</label>
    </interactant>
    <organismsDiffer>false</organismsDiffer>
    <experiments>3</experiments>
</comment>
<comment type="interaction">
    <interactant intactId="EBI-743414">
        <id>O95967</id>
    </interactant>
    <interactant intactId="EBI-930964">
        <id>P54253</id>
        <label>ATXN1</label>
    </interactant>
    <organismsDiffer>false</organismsDiffer>
    <experiments>8</experiments>
</comment>
<comment type="interaction">
    <interactant intactId="EBI-743414">
        <id>O95967</id>
    </interactant>
    <interactant intactId="EBI-10988864">
        <id>P46379-2</id>
        <label>BAG6</label>
    </interactant>
    <organismsDiffer>false</organismsDiffer>
    <experiments>3</experiments>
</comment>
<comment type="interaction">
    <interactant intactId="EBI-743414">
        <id>O95967</id>
    </interactant>
    <interactant intactId="EBI-905851">
        <id>P01024</id>
        <label>C3</label>
    </interactant>
    <organismsDiffer>false</organismsDiffer>
    <experiments>3</experiments>
</comment>
<comment type="interaction">
    <interactant intactId="EBI-743414">
        <id>O95967</id>
    </interactant>
    <interactant intactId="EBI-9995695">
        <id>Q7Z6I8</id>
        <label>C5orf24</label>
    </interactant>
    <organismsDiffer>false</organismsDiffer>
    <experiments>3</experiments>
</comment>
<comment type="interaction">
    <interactant intactId="EBI-743414">
        <id>O95967</id>
    </interactant>
    <interactant intactId="EBI-2802782">
        <id>Q6NVV7</id>
        <label>CDPF1</label>
    </interactant>
    <organismsDiffer>false</organismsDiffer>
    <experiments>3</experiments>
</comment>
<comment type="interaction">
    <interactant intactId="EBI-743414">
        <id>O95967</id>
    </interactant>
    <interactant intactId="EBI-1056029">
        <id>Q16740</id>
        <label>CLPP</label>
    </interactant>
    <organismsDiffer>false</organismsDiffer>
    <experiments>3</experiments>
</comment>
<comment type="interaction">
    <interactant intactId="EBI-743414">
        <id>O95967</id>
    </interactant>
    <interactant intactId="EBI-741032">
        <id>Q8NE01</id>
        <label>CNNM3</label>
    </interactant>
    <organismsDiffer>false</organismsDiffer>
    <experiments>3</experiments>
</comment>
<comment type="interaction">
    <interactant intactId="EBI-743414">
        <id>O95967</id>
    </interactant>
    <interactant intactId="EBI-10192698">
        <id>Q02930-3</id>
        <label>CREB5</label>
    </interactant>
    <organismsDiffer>false</organismsDiffer>
    <experiments>8</experiments>
</comment>
<comment type="interaction">
    <interactant intactId="EBI-743414">
        <id>O95967</id>
    </interactant>
    <interactant intactId="EBI-12175919">
        <id>P42830</id>
        <label>CXCL5</label>
    </interactant>
    <organismsDiffer>false</organismsDiffer>
    <experiments>3</experiments>
</comment>
<comment type="interaction">
    <interactant intactId="EBI-743414">
        <id>O95967</id>
    </interactant>
    <interactant intactId="EBI-3867333">
        <id>A8MQ03</id>
        <label>CYSRT1</label>
    </interactant>
    <organismsDiffer>false</organismsDiffer>
    <experiments>3</experiments>
</comment>
<comment type="interaction">
    <interactant intactId="EBI-743414">
        <id>O95967</id>
    </interactant>
    <interactant intactId="EBI-3046647">
        <id>Q18PE1</id>
        <label>DOK7</label>
    </interactant>
    <organismsDiffer>false</organismsDiffer>
    <experiments>3</experiments>
</comment>
<comment type="interaction">
    <interactant intactId="EBI-743414">
        <id>O95967</id>
    </interactant>
    <interactant intactId="EBI-1222108">
        <id>P15502</id>
        <label>ELN</label>
    </interactant>
    <organismsDiffer>false</organismsDiffer>
    <experiments>5</experiments>
</comment>
<comment type="interaction">
    <interactant intactId="EBI-743414">
        <id>O95967</id>
    </interactant>
    <interactant intactId="EBI-1752811">
        <id>Q9BQ89</id>
        <label>FAM110A</label>
    </interactant>
    <organismsDiffer>false</organismsDiffer>
    <experiments>3</experiments>
</comment>
<comment type="interaction">
    <interactant intactId="EBI-743414">
        <id>O95967</id>
    </interactant>
    <interactant intactId="EBI-6658203">
        <id>Q86YD7</id>
        <label>FAM90A1</label>
    </interactant>
    <organismsDiffer>false</organismsDiffer>
    <experiments>3</experiments>
</comment>
<comment type="interaction">
    <interactant intactId="EBI-743414">
        <id>O95967</id>
    </interactant>
    <interactant intactId="EBI-947897">
        <id>Q9UBX5</id>
        <label>FBLN5</label>
    </interactant>
    <organismsDiffer>false</organismsDiffer>
    <experiments>3</experiments>
</comment>
<comment type="interaction">
    <interactant intactId="EBI-743414">
        <id>O95967</id>
    </interactant>
    <interactant intactId="EBI-2505934">
        <id>P35555</id>
        <label>FBN1</label>
    </interactant>
    <organismsDiffer>false</organismsDiffer>
    <experiments>3</experiments>
</comment>
<comment type="interaction">
    <interactant intactId="EBI-743414">
        <id>O95967</id>
    </interactant>
    <interactant intactId="EBI-741068">
        <id>Q969U6</id>
        <label>FBXW5</label>
    </interactant>
    <organismsDiffer>false</organismsDiffer>
    <experiments>3</experiments>
</comment>
<comment type="interaction">
    <interactant intactId="EBI-743414">
        <id>O95967</id>
    </interactant>
    <interactant intactId="EBI-18138793">
        <id>Q9C0B1-2</id>
        <label>FTO</label>
    </interactant>
    <organismsDiffer>false</organismsDiffer>
    <experiments>3</experiments>
</comment>
<comment type="interaction">
    <interactant intactId="EBI-743414">
        <id>O95967</id>
    </interactant>
    <interactant intactId="EBI-308629">
        <id>P56524</id>
        <label>HDAC4</label>
    </interactant>
    <organismsDiffer>false</organismsDiffer>
    <experiments>3</experiments>
</comment>
<comment type="interaction">
    <interactant intactId="EBI-743414">
        <id>O95967</id>
    </interactant>
    <interactant intactId="EBI-12083878">
        <id>Q96JK4-2</id>
        <label>HHIPL1</label>
    </interactant>
    <organismsDiffer>false</organismsDiffer>
    <experiments>3</experiments>
</comment>
<comment type="interaction">
    <interactant intactId="EBI-743414">
        <id>O95967</id>
    </interactant>
    <interactant intactId="EBI-749311">
        <id>P37235</id>
        <label>HPCAL1</label>
    </interactant>
    <organismsDiffer>false</organismsDiffer>
    <experiments>3</experiments>
</comment>
<comment type="interaction">
    <interactant intactId="EBI-743414">
        <id>O95967</id>
    </interactant>
    <interactant intactId="EBI-3918847">
        <id>Q9H2F3</id>
        <label>HSD3B7</label>
    </interactant>
    <organismsDiffer>false</organismsDiffer>
    <experiments>3</experiments>
</comment>
<comment type="interaction">
    <interactant intactId="EBI-743414">
        <id>O95967</id>
    </interactant>
    <interactant intactId="EBI-10291310">
        <id>Q96MM6</id>
        <label>HSPA12B</label>
    </interactant>
    <organismsDiffer>false</organismsDiffer>
    <experiments>3</experiments>
</comment>
<comment type="interaction">
    <interactant intactId="EBI-743414">
        <id>O95967</id>
    </interactant>
    <interactant intactId="EBI-947015">
        <id>P24592</id>
        <label>IGFBP6</label>
    </interactant>
    <organismsDiffer>false</organismsDiffer>
    <experiments>3</experiments>
</comment>
<comment type="interaction">
    <interactant intactId="EBI-743414">
        <id>O95967</id>
    </interactant>
    <interactant intactId="EBI-17178971">
        <id>Q14005-2</id>
        <label>IL16</label>
    </interactant>
    <organismsDiffer>false</organismsDiffer>
    <experiments>3</experiments>
</comment>
<comment type="interaction">
    <interactant intactId="EBI-743414">
        <id>O95967</id>
    </interactant>
    <interactant intactId="EBI-6509505">
        <id>Q0VD86</id>
        <label>INCA1</label>
    </interactant>
    <organismsDiffer>false</organismsDiffer>
    <experiments>3</experiments>
</comment>
<comment type="interaction">
    <interactant intactId="EBI-743414">
        <id>O95967</id>
    </interactant>
    <interactant intactId="EBI-1223434">
        <id>P18084</id>
        <label>ITGB5</label>
    </interactant>
    <organismsDiffer>false</organismsDiffer>
    <experiments>3</experiments>
</comment>
<comment type="interaction">
    <interactant intactId="EBI-743414">
        <id>O95967</id>
    </interactant>
    <interactant intactId="EBI-8284732">
        <id>Q13351</id>
        <label>KLF1</label>
    </interactant>
    <organismsDiffer>false</organismsDiffer>
    <experiments>3</experiments>
</comment>
<comment type="interaction">
    <interactant intactId="EBI-743414">
        <id>O95967</id>
    </interactant>
    <interactant intactId="EBI-10171774">
        <id>P60410</id>
        <label>KRTAP10-8</label>
    </interactant>
    <organismsDiffer>false</organismsDiffer>
    <experiments>3</experiments>
</comment>
<comment type="interaction">
    <interactant intactId="EBI-743414">
        <id>O95967</id>
    </interactant>
    <interactant intactId="EBI-1052037">
        <id>Q8IUC1</id>
        <label>KRTAP11-1</label>
    </interactant>
    <organismsDiffer>false</organismsDiffer>
    <experiments>3</experiments>
</comment>
<comment type="interaction">
    <interactant intactId="EBI-743414">
        <id>O95967</id>
    </interactant>
    <interactant intactId="EBI-10176379">
        <id>P59991</id>
        <label>KRTAP12-2</label>
    </interactant>
    <organismsDiffer>false</organismsDiffer>
    <experiments>3</experiments>
</comment>
<comment type="interaction">
    <interactant intactId="EBI-743414">
        <id>O95967</id>
    </interactant>
    <interactant intactId="EBI-10241252">
        <id>Q3SY46</id>
        <label>KRTAP13-3</label>
    </interactant>
    <organismsDiffer>false</organismsDiffer>
    <experiments>5</experiments>
</comment>
<comment type="interaction">
    <interactant intactId="EBI-743414">
        <id>O95967</id>
    </interactant>
    <interactant intactId="EBI-1048945">
        <id>Q3LI72</id>
        <label>KRTAP19-5</label>
    </interactant>
    <organismsDiffer>false</organismsDiffer>
    <experiments>3</experiments>
</comment>
<comment type="interaction">
    <interactant intactId="EBI-743414">
        <id>O95967</id>
    </interactant>
    <interactant intactId="EBI-3957672">
        <id>Q6PEX3</id>
        <label>KRTAP26-1</label>
    </interactant>
    <organismsDiffer>false</organismsDiffer>
    <experiments>3</experiments>
</comment>
<comment type="interaction">
    <interactant intactId="EBI-743414">
        <id>O95967</id>
    </interactant>
    <interactant intactId="EBI-751260">
        <id>Q9BYR7</id>
        <label>KRTAP3-2</label>
    </interactant>
    <organismsDiffer>false</organismsDiffer>
    <experiments>3</experiments>
</comment>
<comment type="interaction">
    <interactant intactId="EBI-743414">
        <id>O95967</id>
    </interactant>
    <interactant intactId="EBI-20141748">
        <id>P52954</id>
        <label>LBX1</label>
    </interactant>
    <organismsDiffer>false</organismsDiffer>
    <experiments>3</experiments>
</comment>
<comment type="interaction">
    <interactant intactId="EBI-743414">
        <id>O95967</id>
    </interactant>
    <interactant intactId="EBI-11962058">
        <id>Q5T7P2</id>
        <label>LCE1A</label>
    </interactant>
    <organismsDiffer>false</organismsDiffer>
    <experiments>3</experiments>
</comment>
<comment type="interaction">
    <interactant intactId="EBI-743414">
        <id>O95967</id>
    </interactant>
    <interactant intactId="EBI-12224199">
        <id>Q5T751</id>
        <label>LCE1C</label>
    </interactant>
    <organismsDiffer>false</organismsDiffer>
    <experiments>3</experiments>
</comment>
<comment type="interaction">
    <interactant intactId="EBI-743414">
        <id>O95967</id>
    </interactant>
    <interactant intactId="EBI-11955335">
        <id>Q5T753</id>
        <label>LCE1E</label>
    </interactant>
    <organismsDiffer>false</organismsDiffer>
    <experiments>3</experiments>
</comment>
<comment type="interaction">
    <interactant intactId="EBI-743414">
        <id>O95967</id>
    </interactant>
    <interactant intactId="EBI-11973993">
        <id>Q5TA81</id>
        <label>LCE2C</label>
    </interactant>
    <organismsDiffer>false</organismsDiffer>
    <experiments>3</experiments>
</comment>
<comment type="interaction">
    <interactant intactId="EBI-743414">
        <id>O95967</id>
    </interactant>
    <interactant intactId="EBI-10246750">
        <id>Q5TA82</id>
        <label>LCE2D</label>
    </interactant>
    <organismsDiffer>false</organismsDiffer>
    <experiments>3</experiments>
</comment>
<comment type="interaction">
    <interactant intactId="EBI-743414">
        <id>O95967</id>
    </interactant>
    <interactant intactId="EBI-9394625">
        <id>Q5TA76</id>
        <label>LCE3A</label>
    </interactant>
    <organismsDiffer>false</organismsDiffer>
    <experiments>3</experiments>
</comment>
<comment type="interaction">
    <interactant intactId="EBI-743414">
        <id>O95967</id>
    </interactant>
    <interactant intactId="EBI-10245291">
        <id>Q5T5A8</id>
        <label>LCE3C</label>
    </interactant>
    <organismsDiffer>false</organismsDiffer>
    <experiments>3</experiments>
</comment>
<comment type="interaction">
    <interactant intactId="EBI-743414">
        <id>O95967</id>
    </interactant>
    <interactant intactId="EBI-6658837">
        <id>Q9BYE3</id>
        <label>LCE3D</label>
    </interactant>
    <organismsDiffer>false</organismsDiffer>
    <experiments>3</experiments>
</comment>
<comment type="interaction">
    <interactant intactId="EBI-743414">
        <id>O95967</id>
    </interactant>
    <interactant intactId="EBI-10245456">
        <id>Q5T5B0</id>
        <label>LCE3E</label>
    </interactant>
    <organismsDiffer>false</organismsDiffer>
    <experiments>3</experiments>
</comment>
<comment type="interaction">
    <interactant intactId="EBI-743414">
        <id>O95967</id>
    </interactant>
    <interactant intactId="EBI-739832">
        <id>Q8TBB1</id>
        <label>LNX1</label>
    </interactant>
    <organismsDiffer>false</organismsDiffer>
    <experiments>3</experiments>
</comment>
<comment type="interaction">
    <interactant intactId="EBI-743414">
        <id>O95967</id>
    </interactant>
    <interactant intactId="EBI-3893481">
        <id>P28300</id>
        <label>LOX</label>
    </interactant>
    <organismsDiffer>false</organismsDiffer>
    <experiments>7</experiments>
</comment>
<comment type="interaction">
    <interactant intactId="EBI-743414">
        <id>O95967</id>
    </interactant>
    <interactant intactId="EBI-724076">
        <id>Q99750</id>
        <label>MDFI</label>
    </interactant>
    <organismsDiffer>false</organismsDiffer>
    <experiments>3</experiments>
</comment>
<comment type="interaction">
    <interactant intactId="EBI-743414">
        <id>O95967</id>
    </interactant>
    <interactant intactId="EBI-748397">
        <id>P50222</id>
        <label>MEOX2</label>
    </interactant>
    <organismsDiffer>false</organismsDiffer>
    <experiments>3</experiments>
</comment>
<comment type="interaction">
    <interactant intactId="EBI-743414">
        <id>O95967</id>
    </interactant>
    <interactant intactId="EBI-358272">
        <id>P52815</id>
        <label>MRPL12</label>
    </interactant>
    <organismsDiffer>false</organismsDiffer>
    <experiments>3</experiments>
</comment>
<comment type="interaction">
    <interactant intactId="EBI-743414">
        <id>O95967</id>
    </interactant>
    <interactant intactId="EBI-10211940">
        <id>P50539-3</id>
        <label>MXI1</label>
    </interactant>
    <organismsDiffer>false</organismsDiffer>
    <experiments>3</experiments>
</comment>
<comment type="interaction">
    <interactant intactId="EBI-743414">
        <id>O95967</id>
    </interactant>
    <interactant intactId="EBI-10250949">
        <id>Q6NSM0</id>
        <label>NR1D2</label>
    </interactant>
    <organismsDiffer>false</organismsDiffer>
    <experiments>3</experiments>
</comment>
<comment type="interaction">
    <interactant intactId="EBI-743414">
        <id>O95967</id>
    </interactant>
    <interactant intactId="EBI-12027160">
        <id>Q9P121-3</id>
        <label>NTM</label>
    </interactant>
    <organismsDiffer>false</organismsDiffer>
    <experiments>3</experiments>
</comment>
<comment type="interaction">
    <interactant intactId="EBI-743414">
        <id>O95967</id>
    </interactant>
    <interactant intactId="EBI-1210753">
        <id>Q7Z417</id>
        <label>NUFIP2</label>
    </interactant>
    <organismsDiffer>false</organismsDiffer>
    <experiments>6</experiments>
</comment>
<comment type="interaction">
    <interactant intactId="EBI-743414">
        <id>O95967</id>
    </interactant>
    <interactant intactId="EBI-740446">
        <id>P32242</id>
        <label>OTX1</label>
    </interactant>
    <organismsDiffer>false</organismsDiffer>
    <experiments>3</experiments>
</comment>
<comment type="interaction">
    <interactant intactId="EBI-743414">
        <id>O95967</id>
    </interactant>
    <interactant intactId="EBI-1753251">
        <id>Q99572</id>
        <label>P2RX7</label>
    </interactant>
    <organismsDiffer>false</organismsDiffer>
    <experiments>3</experiments>
</comment>
<comment type="interaction">
    <interactant intactId="EBI-743414">
        <id>O95967</id>
    </interactant>
    <interactant intactId="EBI-748265">
        <id>P78337</id>
        <label>PITX1</label>
    </interactant>
    <organismsDiffer>false</organismsDiffer>
    <experiments>3</experiments>
</comment>
<comment type="interaction">
    <interactant intactId="EBI-743414">
        <id>O95967</id>
    </interactant>
    <interactant intactId="EBI-9027467">
        <id>O75360</id>
        <label>PROP1</label>
    </interactant>
    <organismsDiffer>false</organismsDiffer>
    <experiments>3</experiments>
</comment>
<comment type="interaction">
    <interactant intactId="EBI-743414">
        <id>O95967</id>
    </interactant>
    <interactant intactId="EBI-1567797">
        <id>Q8WWY3</id>
        <label>PRPF31</label>
    </interactant>
    <organismsDiffer>false</organismsDiffer>
    <experiments>6</experiments>
</comment>
<comment type="interaction">
    <interactant intactId="EBI-743414">
        <id>O95967</id>
    </interactant>
    <interactant intactId="EBI-18587059">
        <id>B1ATL7</id>
        <label>PRR32</label>
    </interactant>
    <organismsDiffer>false</organismsDiffer>
    <experiments>3</experiments>
</comment>
<comment type="interaction">
    <interactant intactId="EBI-743414">
        <id>O95967</id>
    </interactant>
    <interactant intactId="EBI-10234038">
        <id>P43115-12</id>
        <label>PTGER3</label>
    </interactant>
    <organismsDiffer>false</organismsDiffer>
    <experiments>3</experiments>
</comment>
<comment type="interaction">
    <interactant intactId="EBI-743414">
        <id>O95967</id>
    </interactant>
    <interactant intactId="EBI-3915431">
        <id>Q12829</id>
        <label>RAB40B</label>
    </interactant>
    <organismsDiffer>false</organismsDiffer>
    <experiments>3</experiments>
</comment>
<comment type="interaction">
    <interactant intactId="EBI-743414">
        <id>O95967</id>
    </interactant>
    <interactant intactId="EBI-1210429">
        <id>Q9NYW8</id>
        <label>RBAK</label>
    </interactant>
    <organismsDiffer>false</organismsDiffer>
    <experiments>3</experiments>
</comment>
<comment type="interaction">
    <interactant intactId="EBI-743414">
        <id>O95967</id>
    </interactant>
    <interactant intactId="EBI-12806054">
        <id>P10745</id>
        <label>RBP3</label>
    </interactant>
    <organismsDiffer>false</organismsDiffer>
    <experiments>3</experiments>
</comment>
<comment type="interaction">
    <interactant intactId="EBI-743414">
        <id>O95967</id>
    </interactant>
    <interactant intactId="EBI-740322">
        <id>Q93062</id>
        <label>RBPMS</label>
    </interactant>
    <organismsDiffer>false</organismsDiffer>
    <experiments>3</experiments>
</comment>
<comment type="interaction">
    <interactant intactId="EBI-743414">
        <id>O95967</id>
    </interactant>
    <interactant intactId="EBI-372094">
        <id>Q9BQY4</id>
        <label>RHOXF2</label>
    </interactant>
    <organismsDiffer>false</organismsDiffer>
    <experiments>2</experiments>
</comment>
<comment type="interaction">
    <interactant intactId="EBI-743414">
        <id>O95967</id>
    </interactant>
    <interactant intactId="EBI-749039">
        <id>Q8WVD3</id>
        <label>RNF138</label>
    </interactant>
    <organismsDiffer>false</organismsDiffer>
    <experiments>3</experiments>
</comment>
<comment type="interaction">
    <interactant intactId="EBI-743414">
        <id>O95967</id>
    </interactant>
    <interactant intactId="EBI-347996">
        <id>O43765</id>
        <label>SGTA</label>
    </interactant>
    <organismsDiffer>false</organismsDiffer>
    <experiments>7</experiments>
</comment>
<comment type="interaction">
    <interactant intactId="EBI-743414">
        <id>O95967</id>
    </interactant>
    <interactant intactId="EBI-744081">
        <id>Q96EQ0</id>
        <label>SGTB</label>
    </interactant>
    <organismsDiffer>false</organismsDiffer>
    <experiments>8</experiments>
</comment>
<comment type="interaction">
    <interactant intactId="EBI-743414">
        <id>O95967</id>
    </interactant>
    <interactant intactId="EBI-12874738">
        <id>O15375</id>
        <label>SLC16A5</label>
    </interactant>
    <organismsDiffer>false</organismsDiffer>
    <experiments>3</experiments>
</comment>
<comment type="interaction">
    <interactant intactId="EBI-743414">
        <id>O95967</id>
    </interactant>
    <interactant intactId="EBI-11998660">
        <id>Q9UHI7-3</id>
        <label>SLC23A1</label>
    </interactant>
    <organismsDiffer>false</organismsDiffer>
    <experiments>3</experiments>
</comment>
<comment type="interaction">
    <interactant intactId="EBI-743414">
        <id>O95967</id>
    </interactant>
    <interactant intactId="EBI-12065614">
        <id>Q6ZT89-3</id>
        <label>SLC25A48</label>
    </interactant>
    <organismsDiffer>false</organismsDiffer>
    <experiments>3</experiments>
</comment>
<comment type="interaction">
    <interactant intactId="EBI-743414">
        <id>O95967</id>
    </interactant>
    <interactant intactId="EBI-722584">
        <id>Q96E40</id>
        <label>SPACA9</label>
    </interactant>
    <organismsDiffer>false</organismsDiffer>
    <experiments>3</experiments>
</comment>
<comment type="interaction">
    <interactant intactId="EBI-743414">
        <id>O95967</id>
    </interactant>
    <interactant intactId="EBI-12041693">
        <id>Q86W54-2</id>
        <label>SPATA24</label>
    </interactant>
    <organismsDiffer>false</organismsDiffer>
    <experiments>3</experiments>
</comment>
<comment type="interaction">
    <interactant intactId="EBI-743414">
        <id>O95967</id>
    </interactant>
    <interactant intactId="EBI-8635958">
        <id>Q6RVD6</id>
        <label>SPATA8</label>
    </interactant>
    <organismsDiffer>false</organismsDiffer>
    <experiments>3</experiments>
</comment>
<comment type="interaction">
    <interactant intactId="EBI-743414">
        <id>O95967</id>
    </interactant>
    <interactant intactId="EBI-354861">
        <id>Q9C004</id>
        <label>SPRY4</label>
    </interactant>
    <organismsDiffer>false</organismsDiffer>
    <experiments>3</experiments>
</comment>
<comment type="interaction">
    <interactant intactId="EBI-743414">
        <id>O95967</id>
    </interactant>
    <interactant intactId="EBI-749295">
        <id>O75716</id>
        <label>STK16</label>
    </interactant>
    <organismsDiffer>false</organismsDiffer>
    <experiments>6</experiments>
</comment>
<comment type="interaction">
    <interactant intactId="EBI-743414">
        <id>O95967</id>
    </interactant>
    <interactant intactId="EBI-741350">
        <id>Q9BT49</id>
        <label>THAP7</label>
    </interactant>
    <organismsDiffer>false</organismsDiffer>
    <experiments>3</experiments>
</comment>
<comment type="interaction">
    <interactant intactId="EBI-743414">
        <id>O95967</id>
    </interactant>
    <interactant intactId="EBI-11741437">
        <id>Q08117-2</id>
        <label>TLE5</label>
    </interactant>
    <organismsDiffer>false</organismsDiffer>
    <experiments>6</experiments>
</comment>
<comment type="interaction">
    <interactant intactId="EBI-743414">
        <id>O95967</id>
    </interactant>
    <interactant intactId="EBI-3939165">
        <id>O43711</id>
        <label>TLX3</label>
    </interactant>
    <organismsDiffer>false</organismsDiffer>
    <experiments>3</experiments>
</comment>
<comment type="interaction">
    <interactant intactId="EBI-743414">
        <id>O95967</id>
    </interactant>
    <interactant intactId="EBI-492476">
        <id>Q96RU7</id>
        <label>TRIB3</label>
    </interactant>
    <organismsDiffer>false</organismsDiffer>
    <experiments>3</experiments>
</comment>
<comment type="interaction">
    <interactant intactId="EBI-743414">
        <id>O95967</id>
    </interactant>
    <interactant intactId="EBI-5235829">
        <id>Q8IWZ5</id>
        <label>TRIM42</label>
    </interactant>
    <organismsDiffer>false</organismsDiffer>
    <experiments>5</experiments>
</comment>
<comment type="interaction">
    <interactant intactId="EBI-743414">
        <id>O95967</id>
    </interactant>
    <interactant intactId="EBI-741480">
        <id>Q9UMX0</id>
        <label>UBQLN1</label>
    </interactant>
    <organismsDiffer>false</organismsDiffer>
    <experiments>5</experiments>
</comment>
<comment type="interaction">
    <interactant intactId="EBI-743414">
        <id>O95967</id>
    </interactant>
    <interactant intactId="EBI-10173939">
        <id>Q9UMX0-2</id>
        <label>UBQLN1</label>
    </interactant>
    <organismsDiffer>false</organismsDiffer>
    <experiments>3</experiments>
</comment>
<comment type="interaction">
    <interactant intactId="EBI-743414">
        <id>O95967</id>
    </interactant>
    <interactant intactId="EBI-373242">
        <id>Q9UK80</id>
        <label>USP21</label>
    </interactant>
    <organismsDiffer>false</organismsDiffer>
    <experiments>3</experiments>
</comment>
<comment type="interaction">
    <interactant intactId="EBI-743414">
        <id>O95967</id>
    </interactant>
    <interactant intactId="EBI-2818408">
        <id>Q14585</id>
        <label>ZNF345</label>
    </interactant>
    <organismsDiffer>false</organismsDiffer>
    <experiments>3</experiments>
</comment>
<comment type="interaction">
    <interactant intactId="EBI-743414">
        <id>O95967</id>
    </interactant>
    <interactant intactId="EBI-373363">
        <id>Q96NG5</id>
        <label>ZNF558</label>
    </interactant>
    <organismsDiffer>false</organismsDiffer>
    <experiments>3</experiments>
</comment>
<comment type="interaction">
    <interactant intactId="EBI-743414">
        <id>O95967</id>
    </interactant>
    <interactant intactId="EBI-8490788">
        <id>Q68EA5</id>
        <label>ZNF57</label>
    </interactant>
    <organismsDiffer>false</organismsDiffer>
    <experiments>3</experiments>
</comment>
<comment type="interaction">
    <interactant intactId="EBI-743414">
        <id>O95967</id>
    </interactant>
    <interactant intactId="EBI-745520">
        <id>Q9P0T4</id>
        <label>ZNF581</label>
    </interactant>
    <organismsDiffer>false</organismsDiffer>
    <experiments>3</experiments>
</comment>
<comment type="interaction">
    <interactant intactId="EBI-743414">
        <id>O95967</id>
    </interactant>
    <interactant intactId="EBI-6427977">
        <id>Q96SQ5</id>
        <label>ZNF587</label>
    </interactant>
    <organismsDiffer>false</organismsDiffer>
    <experiments>3</experiments>
</comment>
<comment type="interaction">
    <interactant intactId="EBI-743414">
        <id>O95967</id>
    </interactant>
    <interactant intactId="EBI-745276">
        <id>Q9BS34</id>
        <label>ZNF670</label>
    </interactant>
    <organismsDiffer>false</organismsDiffer>
    <experiments>3</experiments>
</comment>
<comment type="interaction">
    <interactant intactId="EBI-743414">
        <id>O95967</id>
    </interactant>
    <interactant intactId="EBI-10217363">
        <id>Q32M78</id>
        <label>ZNF699</label>
    </interactant>
    <organismsDiffer>false</organismsDiffer>
    <experiments>3</experiments>
</comment>
<comment type="interaction">
    <interactant intactId="EBI-743414">
        <id>O95967</id>
    </interactant>
    <interactant intactId="EBI-1210580">
        <id>Q9H5H4</id>
        <label>ZNF768</label>
    </interactant>
    <organismsDiffer>false</organismsDiffer>
    <experiments>3</experiments>
</comment>
<comment type="interaction">
    <interactant intactId="EBI-743414">
        <id>O95967</id>
    </interactant>
    <interactant intactId="EBI-10251462">
        <id>Q6NX45</id>
        <label>ZNF774</label>
    </interactant>
    <organismsDiffer>false</organismsDiffer>
    <experiments>3</experiments>
</comment>
<comment type="interaction">
    <interactant intactId="EBI-743414">
        <id>O95967</id>
    </interactant>
    <interactant intactId="EBI-11962574">
        <id>Q96EG3</id>
        <label>ZNF837</label>
    </interactant>
    <organismsDiffer>false</organismsDiffer>
    <experiments>3</experiments>
</comment>
<comment type="interaction">
    <interactant intactId="EBI-743414">
        <id>O95967</id>
    </interactant>
    <interactant intactId="EBI-3957603">
        <id>P09022</id>
        <label>Hoxa1</label>
    </interactant>
    <organismsDiffer>true</organismsDiffer>
    <experiments>3</experiments>
</comment>
<comment type="subcellular location">
    <subcellularLocation>
        <location evidence="18 22">Secreted</location>
        <location evidence="18 22">Extracellular space</location>
        <location evidence="18 22">Extracellular matrix</location>
    </subcellularLocation>
    <subcellularLocation>
        <location evidence="1">Secreted</location>
        <location evidence="1">Extracellular space</location>
        <location evidence="1">Extracellular matrix</location>
        <location evidence="1">Basement membrane</location>
    </subcellularLocation>
    <text evidence="1">Localizes on the microfibrils surrounding ELN cores.</text>
</comment>
<comment type="PTM">
    <text evidence="21 22">N-glycosylated; contains mostly complex-type glycans (PubMed:23782690, PubMed:27339457). Not O-glycosylated (PubMed:27339457).</text>
</comment>
<comment type="PTM">
    <text evidence="22">Cleaved by ELANE; produces a 50-55 kDa fragment (PubMed:27339457). Cleaved by MMP2 and MMP9; produces several fragments (PubMed:27339457).</text>
</comment>
<comment type="disease" evidence="10 12 16 18 20 22">
    <disease id="DI-03318">
        <name>Cutis laxa, autosomal recessive, 1B</name>
        <acronym>ARCL1B</acronym>
        <description>A connective tissue disorder characterized by loose, hyperextensible skin with decreased resilience and elasticity leading to a premature aged appearance. Face, hands, feet, joints, and torso may be differentially affected. The clinical spectrum of autosomal recessive cutis laxa is highly heterogeneous with respect to organ involvement and severity. ARCL1B features include emphysema, lethal pulmonary artery occlusion, aortic aneurysm, cardiopulmonary insufficiency, birth fractures, arachnodactyly, and fragility of blood vessels.</description>
        <dbReference type="MIM" id="614437"/>
    </disease>
    <text>The disease is caused by variants affecting the gene represented in this entry.</text>
</comment>
<comment type="similarity">
    <text evidence="26">Belongs to the fibulin family.</text>
</comment>
<dbReference type="EMBL" id="AJ132819">
    <property type="protein sequence ID" value="CAA10791.2"/>
    <property type="molecule type" value="mRNA"/>
</dbReference>
<dbReference type="EMBL" id="AF093119">
    <property type="protein sequence ID" value="AAC62108.1"/>
    <property type="molecule type" value="mRNA"/>
</dbReference>
<dbReference type="EMBL" id="AF109121">
    <property type="protein sequence ID" value="AAF65188.1"/>
    <property type="molecule type" value="mRNA"/>
</dbReference>
<dbReference type="EMBL" id="AK000980">
    <property type="protein sequence ID" value="BAG50843.1"/>
    <property type="molecule type" value="mRNA"/>
</dbReference>
<dbReference type="EMBL" id="AK292079">
    <property type="protein sequence ID" value="BAF84768.1"/>
    <property type="molecule type" value="mRNA"/>
</dbReference>
<dbReference type="EMBL" id="AY358899">
    <property type="protein sequence ID" value="AAQ89258.1"/>
    <property type="molecule type" value="mRNA"/>
</dbReference>
<dbReference type="EMBL" id="AK075453">
    <property type="protein sequence ID" value="BAG52143.1"/>
    <property type="molecule type" value="mRNA"/>
</dbReference>
<dbReference type="EMBL" id="AP001201">
    <property type="status" value="NOT_ANNOTATED_CDS"/>
    <property type="molecule type" value="Genomic_DNA"/>
</dbReference>
<dbReference type="EMBL" id="BC010456">
    <property type="protein sequence ID" value="AAH10456.1"/>
    <property type="molecule type" value="mRNA"/>
</dbReference>
<dbReference type="CCDS" id="CCDS8116.1"/>
<dbReference type="RefSeq" id="NP_058634.4">
    <property type="nucleotide sequence ID" value="NM_016938.5"/>
</dbReference>
<dbReference type="PDB" id="2KL7">
    <property type="method" value="NMR"/>
    <property type="chains" value="A=54-123"/>
</dbReference>
<dbReference type="PDBsum" id="2KL7"/>
<dbReference type="BMRB" id="O95967"/>
<dbReference type="SMR" id="O95967"/>
<dbReference type="BioGRID" id="119026">
    <property type="interactions" value="136"/>
</dbReference>
<dbReference type="DIP" id="DIP-34518N"/>
<dbReference type="FunCoup" id="O95967">
    <property type="interactions" value="119"/>
</dbReference>
<dbReference type="IntAct" id="O95967">
    <property type="interactions" value="158"/>
</dbReference>
<dbReference type="MINT" id="O95967"/>
<dbReference type="STRING" id="9606.ENSP00000309953"/>
<dbReference type="GlyConnect" id="1199">
    <property type="glycosylation" value="7 N-Linked glycans (1 site)"/>
</dbReference>
<dbReference type="GlyCosmos" id="O95967">
    <property type="glycosylation" value="2 sites, 6 glycans"/>
</dbReference>
<dbReference type="GlyGen" id="O95967">
    <property type="glycosylation" value="3 sites, 29 N-linked glycans (1 site), 1 O-linked glycan (1 site)"/>
</dbReference>
<dbReference type="iPTMnet" id="O95967"/>
<dbReference type="PhosphoSitePlus" id="O95967"/>
<dbReference type="BioMuta" id="EFEMP2"/>
<dbReference type="jPOST" id="O95967"/>
<dbReference type="MassIVE" id="O95967"/>
<dbReference type="PaxDb" id="9606-ENSP00000309953"/>
<dbReference type="PeptideAtlas" id="O95967"/>
<dbReference type="ProteomicsDB" id="51148"/>
<dbReference type="Antibodypedia" id="16033">
    <property type="antibodies" value="390 antibodies from 33 providers"/>
</dbReference>
<dbReference type="DNASU" id="30008"/>
<dbReference type="Ensembl" id="ENST00000307998.11">
    <property type="protein sequence ID" value="ENSP00000309953.6"/>
    <property type="gene ID" value="ENSG00000172638.13"/>
</dbReference>
<dbReference type="Ensembl" id="ENST00000531972.5">
    <property type="protein sequence ID" value="ENSP00000435295.1"/>
    <property type="gene ID" value="ENSG00000172638.13"/>
</dbReference>
<dbReference type="GeneID" id="30008"/>
<dbReference type="KEGG" id="hsa:30008"/>
<dbReference type="MANE-Select" id="ENST00000307998.11">
    <property type="protein sequence ID" value="ENSP00000309953.6"/>
    <property type="RefSeq nucleotide sequence ID" value="NM_016938.5"/>
    <property type="RefSeq protein sequence ID" value="NP_058634.4"/>
</dbReference>
<dbReference type="UCSC" id="uc001ofy.5">
    <property type="organism name" value="human"/>
</dbReference>
<dbReference type="AGR" id="HGNC:3219"/>
<dbReference type="CTD" id="30008"/>
<dbReference type="DisGeNET" id="30008"/>
<dbReference type="GeneCards" id="EFEMP2"/>
<dbReference type="GeneReviews" id="EFEMP2"/>
<dbReference type="HGNC" id="HGNC:3219">
    <property type="gene designation" value="EFEMP2"/>
</dbReference>
<dbReference type="HPA" id="ENSG00000172638">
    <property type="expression patterns" value="Low tissue specificity"/>
</dbReference>
<dbReference type="MalaCards" id="EFEMP2"/>
<dbReference type="MIM" id="604633">
    <property type="type" value="gene"/>
</dbReference>
<dbReference type="MIM" id="614437">
    <property type="type" value="phenotype"/>
</dbReference>
<dbReference type="neXtProt" id="NX_O95967"/>
<dbReference type="OpenTargets" id="ENSG00000172638"/>
<dbReference type="Orphanet" id="90349">
    <property type="disease" value="Autosomal recessive cutis laxa type 1"/>
</dbReference>
<dbReference type="Orphanet" id="314718">
    <property type="disease" value="Lethal arteriopathy syndrome due to fibulin-4 deficiency"/>
</dbReference>
<dbReference type="PharmGKB" id="PA27653"/>
<dbReference type="VEuPathDB" id="HostDB:ENSG00000172638"/>
<dbReference type="eggNOG" id="KOG1217">
    <property type="taxonomic scope" value="Eukaryota"/>
</dbReference>
<dbReference type="GeneTree" id="ENSGT00940000159437"/>
<dbReference type="HOGENOM" id="CLU_004826_0_1_1"/>
<dbReference type="InParanoid" id="O95967"/>
<dbReference type="OMA" id="DPLTEHC"/>
<dbReference type="OrthoDB" id="4062651at2759"/>
<dbReference type="PAN-GO" id="O95967">
    <property type="GO annotations" value="0 GO annotations based on evolutionary models"/>
</dbReference>
<dbReference type="PhylomeDB" id="O95967"/>
<dbReference type="TreeFam" id="TF317514"/>
<dbReference type="PathwayCommons" id="O95967"/>
<dbReference type="Reactome" id="R-HSA-2129379">
    <property type="pathway name" value="Molecules associated with elastic fibres"/>
</dbReference>
<dbReference type="SignaLink" id="O95967"/>
<dbReference type="SIGNOR" id="O95967"/>
<dbReference type="BioGRID-ORCS" id="30008">
    <property type="hits" value="8 hits in 1150 CRISPR screens"/>
</dbReference>
<dbReference type="ChiTaRS" id="EFEMP2">
    <property type="organism name" value="human"/>
</dbReference>
<dbReference type="EvolutionaryTrace" id="O95967"/>
<dbReference type="GeneWiki" id="EFEMP2"/>
<dbReference type="GenomeRNAi" id="30008"/>
<dbReference type="Pharos" id="O95967">
    <property type="development level" value="Tbio"/>
</dbReference>
<dbReference type="PRO" id="PR:O95967"/>
<dbReference type="Proteomes" id="UP000005640">
    <property type="component" value="Chromosome 11"/>
</dbReference>
<dbReference type="RNAct" id="O95967">
    <property type="molecule type" value="protein"/>
</dbReference>
<dbReference type="Bgee" id="ENSG00000172638">
    <property type="expression patterns" value="Expressed in stromal cell of endometrium and 199 other cell types or tissues"/>
</dbReference>
<dbReference type="ExpressionAtlas" id="O95967">
    <property type="expression patterns" value="baseline and differential"/>
</dbReference>
<dbReference type="GO" id="GO:0005604">
    <property type="term" value="C:basement membrane"/>
    <property type="evidence" value="ECO:0000250"/>
    <property type="project" value="UniProtKB"/>
</dbReference>
<dbReference type="GO" id="GO:0062023">
    <property type="term" value="C:collagen-containing extracellular matrix"/>
    <property type="evidence" value="ECO:0007005"/>
    <property type="project" value="BHF-UCL"/>
</dbReference>
<dbReference type="GO" id="GO:0071953">
    <property type="term" value="C:elastic fiber"/>
    <property type="evidence" value="ECO:0000314"/>
    <property type="project" value="UniProtKB"/>
</dbReference>
<dbReference type="GO" id="GO:0070062">
    <property type="term" value="C:extracellular exosome"/>
    <property type="evidence" value="ECO:0007005"/>
    <property type="project" value="UniProtKB"/>
</dbReference>
<dbReference type="GO" id="GO:0031012">
    <property type="term" value="C:extracellular matrix"/>
    <property type="evidence" value="ECO:0000314"/>
    <property type="project" value="UniProtKB"/>
</dbReference>
<dbReference type="GO" id="GO:0005576">
    <property type="term" value="C:extracellular region"/>
    <property type="evidence" value="ECO:0000304"/>
    <property type="project" value="Reactome"/>
</dbReference>
<dbReference type="GO" id="GO:1903561">
    <property type="term" value="C:extracellular vesicle"/>
    <property type="evidence" value="ECO:0007005"/>
    <property type="project" value="UniProtKB"/>
</dbReference>
<dbReference type="GO" id="GO:0001527">
    <property type="term" value="C:microfibril"/>
    <property type="evidence" value="ECO:0000250"/>
    <property type="project" value="UniProtKB"/>
</dbReference>
<dbReference type="GO" id="GO:0005509">
    <property type="term" value="F:calcium ion binding"/>
    <property type="evidence" value="ECO:0007669"/>
    <property type="project" value="InterPro"/>
</dbReference>
<dbReference type="GO" id="GO:0005201">
    <property type="term" value="F:extracellular matrix structural constituent"/>
    <property type="evidence" value="ECO:0000304"/>
    <property type="project" value="ProtInc"/>
</dbReference>
<dbReference type="GO" id="GO:0008201">
    <property type="term" value="F:heparin binding"/>
    <property type="evidence" value="ECO:0000314"/>
    <property type="project" value="UniProtKB"/>
</dbReference>
<dbReference type="GO" id="GO:0042803">
    <property type="term" value="F:protein homodimerization activity"/>
    <property type="evidence" value="ECO:0000314"/>
    <property type="project" value="UniProtKB"/>
</dbReference>
<dbReference type="GO" id="GO:0035904">
    <property type="term" value="P:aorta development"/>
    <property type="evidence" value="ECO:0000250"/>
    <property type="project" value="UniProtKB"/>
</dbReference>
<dbReference type="GO" id="GO:0060414">
    <property type="term" value="P:aorta smooth muscle tissue morphogenesis"/>
    <property type="evidence" value="ECO:0000250"/>
    <property type="project" value="UniProtKB"/>
</dbReference>
<dbReference type="GO" id="GO:0048251">
    <property type="term" value="P:elastic fiber assembly"/>
    <property type="evidence" value="ECO:0000315"/>
    <property type="project" value="UniProtKB"/>
</dbReference>
<dbReference type="GO" id="GO:1904706">
    <property type="term" value="P:negative regulation of vascular associated smooth muscle cell proliferation"/>
    <property type="evidence" value="ECO:0000250"/>
    <property type="project" value="UniProtKB"/>
</dbReference>
<dbReference type="GO" id="GO:1904831">
    <property type="term" value="P:positive regulation of aortic smooth muscle cell differentiation"/>
    <property type="evidence" value="ECO:0000250"/>
    <property type="project" value="UniProtKB"/>
</dbReference>
<dbReference type="GO" id="GO:1904028">
    <property type="term" value="P:positive regulation of collagen fibril organization"/>
    <property type="evidence" value="ECO:0000250"/>
    <property type="project" value="UniProtKB"/>
</dbReference>
<dbReference type="GO" id="GO:1905609">
    <property type="term" value="P:positive regulation of smooth muscle cell-matrix adhesion"/>
    <property type="evidence" value="ECO:0000315"/>
    <property type="project" value="UniProtKB"/>
</dbReference>
<dbReference type="GO" id="GO:1904026">
    <property type="term" value="P:regulation of collagen fibril organization"/>
    <property type="evidence" value="ECO:0000250"/>
    <property type="project" value="UniProtKB"/>
</dbReference>
<dbReference type="GO" id="GO:0097084">
    <property type="term" value="P:vascular associated smooth muscle cell development"/>
    <property type="evidence" value="ECO:0000250"/>
    <property type="project" value="UniProtKB"/>
</dbReference>
<dbReference type="CDD" id="cd00054">
    <property type="entry name" value="EGF_CA"/>
    <property type="match status" value="2"/>
</dbReference>
<dbReference type="FunFam" id="2.10.25.10:FF:000201">
    <property type="entry name" value="EGF-containing fibulin-like extracellular matrix protein 2"/>
    <property type="match status" value="1"/>
</dbReference>
<dbReference type="FunFam" id="2.10.25.10:FF:000290">
    <property type="entry name" value="EGF-containing fibulin-like extracellular matrix protein 2"/>
    <property type="match status" value="1"/>
</dbReference>
<dbReference type="FunFam" id="2.10.25.10:FF:000366">
    <property type="entry name" value="EGF-containing fibulin-like extracellular matrix protein 2"/>
    <property type="match status" value="1"/>
</dbReference>
<dbReference type="FunFam" id="2.10.25.10:FF:000367">
    <property type="entry name" value="EGF-containing fibulin-like extracellular matrix protein 2"/>
    <property type="match status" value="1"/>
</dbReference>
<dbReference type="FunFam" id="2.10.25.10:FF:000210">
    <property type="entry name" value="Hemicentin 1"/>
    <property type="match status" value="1"/>
</dbReference>
<dbReference type="FunFam" id="2.10.25.10:FF:000014">
    <property type="entry name" value="Latent-transforming growth factor beta-binding protein 3"/>
    <property type="match status" value="1"/>
</dbReference>
<dbReference type="Gene3D" id="2.10.25.10">
    <property type="entry name" value="Laminin"/>
    <property type="match status" value="6"/>
</dbReference>
<dbReference type="InterPro" id="IPR026823">
    <property type="entry name" value="cEGF"/>
</dbReference>
<dbReference type="InterPro" id="IPR001881">
    <property type="entry name" value="EGF-like_Ca-bd_dom"/>
</dbReference>
<dbReference type="InterPro" id="IPR013032">
    <property type="entry name" value="EGF-like_CS"/>
</dbReference>
<dbReference type="InterPro" id="IPR000742">
    <property type="entry name" value="EGF-like_dom"/>
</dbReference>
<dbReference type="InterPro" id="IPR000152">
    <property type="entry name" value="EGF-type_Asp/Asn_hydroxyl_site"/>
</dbReference>
<dbReference type="InterPro" id="IPR018097">
    <property type="entry name" value="EGF_Ca-bd_CS"/>
</dbReference>
<dbReference type="InterPro" id="IPR055088">
    <property type="entry name" value="Fibulin_C"/>
</dbReference>
<dbReference type="InterPro" id="IPR009030">
    <property type="entry name" value="Growth_fac_rcpt_cys_sf"/>
</dbReference>
<dbReference type="InterPro" id="IPR052235">
    <property type="entry name" value="Nephronectin_domain"/>
</dbReference>
<dbReference type="InterPro" id="IPR049883">
    <property type="entry name" value="NOTCH1_EGF-like"/>
</dbReference>
<dbReference type="PANTHER" id="PTHR24050">
    <property type="entry name" value="PA14 DOMAIN-CONTAINING PROTEIN"/>
    <property type="match status" value="1"/>
</dbReference>
<dbReference type="PANTHER" id="PTHR24050:SF28">
    <property type="entry name" value="UROMODULIN-LIKE"/>
    <property type="match status" value="1"/>
</dbReference>
<dbReference type="Pfam" id="PF12662">
    <property type="entry name" value="cEGF"/>
    <property type="match status" value="2"/>
</dbReference>
<dbReference type="Pfam" id="PF07645">
    <property type="entry name" value="EGF_CA"/>
    <property type="match status" value="3"/>
</dbReference>
<dbReference type="Pfam" id="PF22914">
    <property type="entry name" value="Fibulin_C"/>
    <property type="match status" value="1"/>
</dbReference>
<dbReference type="Pfam" id="PF12661">
    <property type="entry name" value="hEGF"/>
    <property type="match status" value="1"/>
</dbReference>
<dbReference type="PRINTS" id="PR00907">
    <property type="entry name" value="THRMBOMODULN"/>
</dbReference>
<dbReference type="SMART" id="SM00181">
    <property type="entry name" value="EGF"/>
    <property type="match status" value="5"/>
</dbReference>
<dbReference type="SMART" id="SM00179">
    <property type="entry name" value="EGF_CA"/>
    <property type="match status" value="6"/>
</dbReference>
<dbReference type="SUPFAM" id="SSF57184">
    <property type="entry name" value="Growth factor receptor domain"/>
    <property type="match status" value="2"/>
</dbReference>
<dbReference type="PROSITE" id="PS00010">
    <property type="entry name" value="ASX_HYDROXYL"/>
    <property type="match status" value="4"/>
</dbReference>
<dbReference type="PROSITE" id="PS01186">
    <property type="entry name" value="EGF_2"/>
    <property type="match status" value="4"/>
</dbReference>
<dbReference type="PROSITE" id="PS50026">
    <property type="entry name" value="EGF_3"/>
    <property type="match status" value="4"/>
</dbReference>
<dbReference type="PROSITE" id="PS01187">
    <property type="entry name" value="EGF_CA"/>
    <property type="match status" value="6"/>
</dbReference>
<sequence length="443" mass="49405">MLPCASCLPGSLLLWALLLLLLGSASPQDSEEPDSYTECTDGYEWDPDSQHCRDVNECLTIPEACKGEMKCINHYGGYLCLPRSAAVINDLHGEGPPPPVPPAQHPNPCPPGYEPDDQDSCVDVDECAQALHDCRPSQDCHNLPGSYQCTCPDGYRKIGPECVDIDECRYRYCQHRCVNLPGSFRCQCEPGFQLGPNNRSCVDVNECDMGAPCEQRCFNSYGTFLCRCHQGYELHRDGFSCSDIDECSYSSYLCQYRCINEPGRFSCHCPQGYQLLATRLCQDIDECESGAHQCSEAQTCVNFHGGYRCVDTNRCVEPYIQVSENRCLCPASNPLCREQPSSIVHRYMTITSERSVPADVFQIQATSVYPGAYNAFQIRAGNSQGDFYIRQINNVSAMLVLARPVTGPREYVLDLEMVTMNSLMSYRASSVLRLTVFVGAYTF</sequence>
<feature type="signal peptide" evidence="21">
    <location>
        <begin position="1"/>
        <end position="23"/>
    </location>
</feature>
<feature type="chain" id="PRO_0000007575" description="EGF-containing fibulin-like extracellular matrix protein 2">
    <location>
        <begin position="24"/>
        <end position="443"/>
    </location>
</feature>
<feature type="domain" description="EGF-like 1; atypical" evidence="3">
    <location>
        <begin position="36"/>
        <end position="81"/>
    </location>
</feature>
<feature type="domain" description="EGF-like 2; calcium-binding" evidence="3">
    <location>
        <begin position="123"/>
        <end position="163"/>
    </location>
</feature>
<feature type="domain" description="EGF-like 3; calcium-binding" evidence="3">
    <location>
        <begin position="164"/>
        <end position="202"/>
    </location>
</feature>
<feature type="domain" description="EGF-like 4; calcium-binding" evidence="3">
    <location>
        <begin position="203"/>
        <end position="242"/>
    </location>
</feature>
<feature type="domain" description="EGF-like 5; calcium-binding" evidence="3">
    <location>
        <begin position="243"/>
        <end position="282"/>
    </location>
</feature>
<feature type="domain" description="EGF-like 6; calcium-binding" evidence="3">
    <location>
        <begin position="283"/>
        <end position="328"/>
    </location>
</feature>
<feature type="site" description="Cleavage; by ELANE" evidence="22">
    <location>
        <begin position="87"/>
        <end position="88"/>
    </location>
</feature>
<feature type="site" description="Cleavage; by MMP2, MMP3, MMP7, MMP9, MMP12" evidence="21 22">
    <location>
        <begin position="90"/>
        <end position="91"/>
    </location>
</feature>
<feature type="site" description="Cleavage" evidence="21">
    <location>
        <begin position="92"/>
        <end position="93"/>
    </location>
</feature>
<feature type="glycosylation site" description="N-linked (GlcNAc...) asparagine" evidence="2">
    <location>
        <position position="198"/>
    </location>
</feature>
<feature type="glycosylation site" description="N-linked (GlcNAc...) asparagine" evidence="2">
    <location>
        <position position="394"/>
    </location>
</feature>
<feature type="disulfide bond" evidence="3 23">
    <location>
        <begin position="58"/>
        <end position="121"/>
    </location>
</feature>
<feature type="disulfide bond" evidence="3 23">
    <location>
        <begin position="65"/>
        <end position="80"/>
    </location>
</feature>
<feature type="disulfide bond" evidence="3 23">
    <location>
        <begin position="71"/>
        <end position="109"/>
    </location>
</feature>
<feature type="disulfide bond" evidence="3">
    <location>
        <begin position="127"/>
        <end position="140"/>
    </location>
</feature>
<feature type="disulfide bond" evidence="3">
    <location>
        <begin position="134"/>
        <end position="149"/>
    </location>
</feature>
<feature type="disulfide bond" evidence="3">
    <location>
        <begin position="151"/>
        <end position="162"/>
    </location>
</feature>
<feature type="disulfide bond" evidence="3">
    <location>
        <begin position="168"/>
        <end position="177"/>
    </location>
</feature>
<feature type="disulfide bond" evidence="3">
    <location>
        <begin position="173"/>
        <end position="186"/>
    </location>
</feature>
<feature type="disulfide bond" evidence="3">
    <location>
        <begin position="188"/>
        <end position="201"/>
    </location>
</feature>
<feature type="disulfide bond" evidence="3">
    <location>
        <begin position="207"/>
        <end position="217"/>
    </location>
</feature>
<feature type="disulfide bond" evidence="3">
    <location>
        <begin position="213"/>
        <end position="226"/>
    </location>
</feature>
<feature type="disulfide bond" evidence="3">
    <location>
        <begin position="228"/>
        <end position="241"/>
    </location>
</feature>
<feature type="disulfide bond" evidence="3">
    <location>
        <begin position="247"/>
        <end position="258"/>
    </location>
</feature>
<feature type="disulfide bond" evidence="3">
    <location>
        <begin position="254"/>
        <end position="267"/>
    </location>
</feature>
<feature type="disulfide bond" evidence="3">
    <location>
        <begin position="269"/>
        <end position="281"/>
    </location>
</feature>
<feature type="disulfide bond" evidence="3">
    <location>
        <begin position="287"/>
        <end position="300"/>
    </location>
</feature>
<feature type="disulfide bond" evidence="3">
    <location>
        <begin position="294"/>
        <end position="309"/>
    </location>
</feature>
<feature type="disulfide bond" evidence="3">
    <location>
        <begin position="315"/>
        <end position="327"/>
    </location>
</feature>
<feature type="sequence variant" id="VAR_027019" description="In ARCL1B; does not affect secretion; decreased elastic fiber assembly; loss of interaction with collagen type IV trimer, FBN1, highly glycosylated form of LOX and LTBP1; Does not affect interaction with LOX when LOX is non-glycosylated; proteolyzed by PLG; dbSNP:rs119489101." evidence="10 22">
    <original>E</original>
    <variation>K</variation>
    <location>
        <position position="57"/>
    </location>
</feature>
<feature type="sequence variant" id="VAR_084029" description="In ARCL1B; slightly decreased protein abundance in patient dermal fibroblasts; increased transforming growth factor beta receptor signaling pathway in patient fibroblasts; strongly decreased secretion; decreased elastic fiber assembly; loss of interaction with collagen type IV trimer, FBN1 and LTBP1; decreased interaction with LOXL2; new fragments proteolyzed by ELANE; new one fragment proteolyzed by MMP2." evidence="18 22">
    <original>E</original>
    <variation>K</variation>
    <location>
        <position position="126"/>
    </location>
</feature>
<feature type="sequence variant" id="VAR_084030" description="In ARCL1B." evidence="18">
    <original>E</original>
    <variation>V</variation>
    <location>
        <position position="126"/>
    </location>
</feature>
<feature type="sequence variant" id="VAR_084031" description="In ARCL1B." evidence="20">
    <original>D</original>
    <variation>A</variation>
    <location>
        <position position="203"/>
    </location>
</feature>
<feature type="sequence variant" id="VAR_084032" description="In ARCL1B." evidence="20">
    <original>R</original>
    <variation>C</variation>
    <location>
        <position position="227"/>
    </location>
</feature>
<feature type="sequence variant" id="VAR_027020" description="In dbSNP:rs601314." evidence="4 5 6 7 8 9 24">
    <original>I</original>
    <variation>V</variation>
    <location>
        <position position="259"/>
    </location>
</feature>
<feature type="sequence variant" id="VAR_067069" description="In ARCL1B; loss of protein expression in patient dermal fibroblasts; increased transforming growth factor beta receptor signaling pathway in patient fibroblasts; loss of protein expression; strongly decreased secretion; dbSNP:rs193302866." evidence="16 18 22">
    <original>C</original>
    <variation>Y</variation>
    <location>
        <position position="267"/>
    </location>
</feature>
<feature type="sequence variant" id="VAR_067070" description="In ARCL1B; loss of secretion; dbSNP:rs119489102." evidence="12 18 22">
    <original>R</original>
    <variation>C</variation>
    <location>
        <position position="279"/>
    </location>
</feature>
<feature type="sequence variant" id="VAR_084033" description="In ARCL1B; increased N-glycosylation; introduced an extra O-glycosylation site; does not affect secretion; decreased elastic fiber assembly; decreased interaction with collagen type IV trimer, FBN1, ELN, LTBP1, LOXL1 and LOXL2; new fragments proteolyzed by ELANE." evidence="18 22">
    <original>A</original>
    <variation>T</variation>
    <location>
        <position position="397"/>
    </location>
</feature>
<feature type="sequence conflict" description="In Ref. 1; CAA10791." evidence="26" ref="1">
    <original>A</original>
    <variation>T</variation>
    <location>
        <position position="5"/>
    </location>
</feature>
<feature type="sequence conflict" description="In Ref. 9; AA sequence." evidence="26" ref="9">
    <original>SASP</original>
    <variation>APLA</variation>
    <location>
        <begin position="24"/>
        <end position="27"/>
    </location>
</feature>
<feature type="sequence conflict" description="In Ref. 2; AAC62108." evidence="26" ref="2">
    <original>EWDPDSQH</original>
    <variation>TQTAN</variation>
    <location>
        <begin position="44"/>
        <end position="51"/>
    </location>
</feature>
<feature type="sequence conflict" description="In Ref. 4; BAF84768." evidence="26" ref="4">
    <original>D</original>
    <variation>G</variation>
    <location>
        <position position="46"/>
    </location>
</feature>
<feature type="sequence conflict" description="In Ref. 4; BAG50843." evidence="26" ref="4">
    <original>P</original>
    <variation>L</variation>
    <location>
        <position position="96"/>
    </location>
</feature>
<feature type="sequence conflict" description="In Ref. 2; AAC62108." evidence="26" ref="2">
    <original>AQHPNPCPP</original>
    <variation>VNTQPLPT</variation>
    <location>
        <begin position="103"/>
        <end position="111"/>
    </location>
</feature>
<feature type="sequence conflict" description="In Ref. 2; AAC62108." evidence="26" ref="2">
    <original>C</original>
    <variation>W</variation>
    <location>
        <position position="294"/>
    </location>
</feature>
<feature type="sequence conflict" description="In Ref. 2; AAC62108." evidence="26" ref="2">
    <original>RSV</original>
    <variation>AER</variation>
    <location>
        <begin position="354"/>
        <end position="356"/>
    </location>
</feature>
<feature type="sequence conflict" description="In Ref. 3; AAF65188." evidence="26" ref="3">
    <original>S</original>
    <variation>R</variation>
    <location>
        <position position="355"/>
    </location>
</feature>
<feature type="strand" evidence="28">
    <location>
        <begin position="68"/>
        <end position="73"/>
    </location>
</feature>
<feature type="strand" evidence="28">
    <location>
        <begin position="78"/>
        <end position="82"/>
    </location>
</feature>
<feature type="strand" evidence="28">
    <location>
        <begin position="113"/>
        <end position="116"/>
    </location>
</feature>
<protein>
    <recommendedName>
        <fullName evidence="26">EGF-containing fibulin-like extracellular matrix protein 2</fullName>
    </recommendedName>
    <alternativeName>
        <fullName evidence="25">Fibulin-4</fullName>
        <shortName>FIBL-4</shortName>
    </alternativeName>
    <alternativeName>
        <fullName>Protein UPH1</fullName>
    </alternativeName>
</protein>
<keyword id="KW-0002">3D-structure</keyword>
<keyword id="KW-0084">Basement membrane</keyword>
<keyword id="KW-0106">Calcium</keyword>
<keyword id="KW-0903">Direct protein sequencing</keyword>
<keyword id="KW-0225">Disease variant</keyword>
<keyword id="KW-1015">Disulfide bond</keyword>
<keyword id="KW-0245">EGF-like domain</keyword>
<keyword id="KW-0272">Extracellular matrix</keyword>
<keyword id="KW-0325">Glycoprotein</keyword>
<keyword id="KW-1267">Proteomics identification</keyword>
<keyword id="KW-1185">Reference proteome</keyword>
<keyword id="KW-0677">Repeat</keyword>
<keyword id="KW-0964">Secreted</keyword>
<keyword id="KW-0732">Signal</keyword>
<accession>O95967</accession>
<accession>A8K7R4</accession>
<accession>B3KM31</accession>
<accession>B3KQT1</accession>
<accession>O75967</accession>
<name>FBLN4_HUMAN</name>
<evidence type="ECO:0000250" key="1">
    <source>
        <dbReference type="UniProtKB" id="Q9WVJ9"/>
    </source>
</evidence>
<evidence type="ECO:0000255" key="2"/>
<evidence type="ECO:0000255" key="3">
    <source>
        <dbReference type="PROSITE-ProRule" id="PRU00076"/>
    </source>
</evidence>
<evidence type="ECO:0000269" key="4">
    <source>
    </source>
</evidence>
<evidence type="ECO:0000269" key="5">
    <source>
    </source>
</evidence>
<evidence type="ECO:0000269" key="6">
    <source>
    </source>
</evidence>
<evidence type="ECO:0000269" key="7">
    <source>
    </source>
</evidence>
<evidence type="ECO:0000269" key="8">
    <source>
    </source>
</evidence>
<evidence type="ECO:0000269" key="9">
    <source>
    </source>
</evidence>
<evidence type="ECO:0000269" key="10">
    <source>
    </source>
</evidence>
<evidence type="ECO:0000269" key="11">
    <source>
    </source>
</evidence>
<evidence type="ECO:0000269" key="12">
    <source>
    </source>
</evidence>
<evidence type="ECO:0000269" key="13">
    <source>
    </source>
</evidence>
<evidence type="ECO:0000269" key="14">
    <source>
    </source>
</evidence>
<evidence type="ECO:0000269" key="15">
    <source>
    </source>
</evidence>
<evidence type="ECO:0000269" key="16">
    <source>
    </source>
</evidence>
<evidence type="ECO:0000269" key="17">
    <source>
    </source>
</evidence>
<evidence type="ECO:0000269" key="18">
    <source>
    </source>
</evidence>
<evidence type="ECO:0000269" key="19">
    <source>
    </source>
</evidence>
<evidence type="ECO:0000269" key="20">
    <source>
    </source>
</evidence>
<evidence type="ECO:0000269" key="21">
    <source>
    </source>
</evidence>
<evidence type="ECO:0000269" key="22">
    <source>
    </source>
</evidence>
<evidence type="ECO:0000269" key="23">
    <source ref="18"/>
</evidence>
<evidence type="ECO:0000269" key="24">
    <source ref="2"/>
</evidence>
<evidence type="ECO:0000303" key="25">
    <source>
    </source>
</evidence>
<evidence type="ECO:0000305" key="26"/>
<evidence type="ECO:0000312" key="27">
    <source>
        <dbReference type="HGNC" id="HGNC:3219"/>
    </source>
</evidence>
<evidence type="ECO:0007829" key="28">
    <source>
        <dbReference type="PDB" id="2KL7"/>
    </source>
</evidence>